<proteinExistence type="inferred from homology"/>
<protein>
    <recommendedName>
        <fullName evidence="1">Glutamyl-tRNA reductase 1</fullName>
        <shortName evidence="1">GluTR 1</shortName>
        <ecNumber evidence="1">1.2.1.70</ecNumber>
    </recommendedName>
</protein>
<gene>
    <name evidence="1" type="primary">hemA1</name>
    <name type="ordered locus">Pars_0928</name>
</gene>
<keyword id="KW-0521">NADP</keyword>
<keyword id="KW-0560">Oxidoreductase</keyword>
<keyword id="KW-0627">Porphyrin biosynthesis</keyword>
<evidence type="ECO:0000255" key="1">
    <source>
        <dbReference type="HAMAP-Rule" id="MF_00087"/>
    </source>
</evidence>
<name>HEM11_PYRAR</name>
<feature type="chain" id="PRO_0000335096" description="Glutamyl-tRNA reductase 1">
    <location>
        <begin position="1"/>
        <end position="387"/>
    </location>
</feature>
<feature type="active site" description="Nucleophile" evidence="1">
    <location>
        <position position="46"/>
    </location>
</feature>
<feature type="binding site" evidence="1">
    <location>
        <begin position="45"/>
        <end position="48"/>
    </location>
    <ligand>
        <name>substrate</name>
    </ligand>
</feature>
<feature type="binding site" evidence="1">
    <location>
        <position position="96"/>
    </location>
    <ligand>
        <name>substrate</name>
    </ligand>
</feature>
<feature type="binding site" evidence="1">
    <location>
        <begin position="101"/>
        <end position="103"/>
    </location>
    <ligand>
        <name>substrate</name>
    </ligand>
</feature>
<feature type="binding site" evidence="1">
    <location>
        <position position="107"/>
    </location>
    <ligand>
        <name>substrate</name>
    </ligand>
</feature>
<feature type="binding site" evidence="1">
    <location>
        <begin position="175"/>
        <end position="180"/>
    </location>
    <ligand>
        <name>NADP(+)</name>
        <dbReference type="ChEBI" id="CHEBI:58349"/>
    </ligand>
</feature>
<feature type="site" description="Important for activity" evidence="1">
    <location>
        <position position="86"/>
    </location>
</feature>
<sequence>MDLVNGLVALSLTHKELGVDELSKVANGVHRVCVSLRQPLFVLHTCNRVEAYLYNPPDEVVEIVKSGYAPYVEKVVERRGVDAARHLFRVAAGLESMLIGETDVLGQLEEAFDRQVRAGYTRELLKTVVERAIRVGKRVRTETGISRGPRGLGSLSILYVKEKIDLTNARVCVIGAGSVGRGLVKELIDAGARRLVVVNRSVEKAADLGVEVWPLSERSVERCLEDFDVVFTAVATFEPIIKSVPRDARVRIIVDMGMPRNTAAGLPVEVVTIDSLRDLADRFNAMRDAEIKKAEEIVEEELVALERLLRIRWVEEVSAKLLEYWFKIAEEEGERAGGLEAKIAARTTVKRTLLPVVNYLKKVAVSDIDEAYRIISVLRLSYGLKDL</sequence>
<accession>A4WJE1</accession>
<organism>
    <name type="scientific">Pyrobaculum arsenaticum (strain DSM 13514 / JCM 11321 / PZ6)</name>
    <dbReference type="NCBI Taxonomy" id="340102"/>
    <lineage>
        <taxon>Archaea</taxon>
        <taxon>Thermoproteota</taxon>
        <taxon>Thermoprotei</taxon>
        <taxon>Thermoproteales</taxon>
        <taxon>Thermoproteaceae</taxon>
        <taxon>Pyrobaculum</taxon>
    </lineage>
</organism>
<comment type="function">
    <text evidence="1">Catalyzes the NADPH-dependent reduction of glutamyl-tRNA(Glu) to glutamate 1-semialdehyde (GSA).</text>
</comment>
<comment type="catalytic activity">
    <reaction evidence="1">
        <text>(S)-4-amino-5-oxopentanoate + tRNA(Glu) + NADP(+) = L-glutamyl-tRNA(Glu) + NADPH + H(+)</text>
        <dbReference type="Rhea" id="RHEA:12344"/>
        <dbReference type="Rhea" id="RHEA-COMP:9663"/>
        <dbReference type="Rhea" id="RHEA-COMP:9680"/>
        <dbReference type="ChEBI" id="CHEBI:15378"/>
        <dbReference type="ChEBI" id="CHEBI:57501"/>
        <dbReference type="ChEBI" id="CHEBI:57783"/>
        <dbReference type="ChEBI" id="CHEBI:58349"/>
        <dbReference type="ChEBI" id="CHEBI:78442"/>
        <dbReference type="ChEBI" id="CHEBI:78520"/>
        <dbReference type="EC" id="1.2.1.70"/>
    </reaction>
</comment>
<comment type="pathway">
    <text evidence="1">Porphyrin-containing compound metabolism; protoporphyrin-IX biosynthesis; 5-aminolevulinate from L-glutamyl-tRNA(Glu): step 1/2.</text>
</comment>
<comment type="subunit">
    <text evidence="1">Homodimer.</text>
</comment>
<comment type="domain">
    <text evidence="1">Possesses an unusual extended V-shaped dimeric structure with each monomer consisting of three distinct domains arranged along a curved 'spinal' alpha-helix. The N-terminal catalytic domain specifically recognizes the glutamate moiety of the substrate. The second domain is the NADPH-binding domain, and the third C-terminal domain is responsible for dimerization.</text>
</comment>
<comment type="miscellaneous">
    <text evidence="1">During catalysis, the active site Cys acts as a nucleophile attacking the alpha-carbonyl group of tRNA-bound glutamate with the formation of a thioester intermediate between enzyme and glutamate, and the concomitant release of tRNA(Glu). The thioester intermediate is finally reduced by direct hydride transfer from NADPH, to form the product GSA.</text>
</comment>
<comment type="similarity">
    <text evidence="1">Belongs to the glutamyl-tRNA reductase family.</text>
</comment>
<dbReference type="EC" id="1.2.1.70" evidence="1"/>
<dbReference type="EMBL" id="CP000660">
    <property type="protein sequence ID" value="ABP50508.1"/>
    <property type="molecule type" value="Genomic_DNA"/>
</dbReference>
<dbReference type="RefSeq" id="WP_011900415.1">
    <property type="nucleotide sequence ID" value="NC_009376.1"/>
</dbReference>
<dbReference type="SMR" id="A4WJE1"/>
<dbReference type="STRING" id="340102.Pars_0928"/>
<dbReference type="GeneID" id="5054302"/>
<dbReference type="KEGG" id="pas:Pars_0928"/>
<dbReference type="HOGENOM" id="CLU_035113_0_0_2"/>
<dbReference type="OrthoDB" id="4562at2157"/>
<dbReference type="PhylomeDB" id="A4WJE1"/>
<dbReference type="UniPathway" id="UPA00251">
    <property type="reaction ID" value="UER00316"/>
</dbReference>
<dbReference type="Proteomes" id="UP000001567">
    <property type="component" value="Chromosome"/>
</dbReference>
<dbReference type="GO" id="GO:0008883">
    <property type="term" value="F:glutamyl-tRNA reductase activity"/>
    <property type="evidence" value="ECO:0007669"/>
    <property type="project" value="UniProtKB-UniRule"/>
</dbReference>
<dbReference type="GO" id="GO:0050661">
    <property type="term" value="F:NADP binding"/>
    <property type="evidence" value="ECO:0007669"/>
    <property type="project" value="InterPro"/>
</dbReference>
<dbReference type="GO" id="GO:0019353">
    <property type="term" value="P:protoporphyrinogen IX biosynthetic process from glutamate"/>
    <property type="evidence" value="ECO:0007669"/>
    <property type="project" value="TreeGrafter"/>
</dbReference>
<dbReference type="Gene3D" id="3.30.460.30">
    <property type="entry name" value="Glutamyl-tRNA reductase, N-terminal domain"/>
    <property type="match status" value="1"/>
</dbReference>
<dbReference type="Gene3D" id="3.40.50.720">
    <property type="entry name" value="NAD(P)-binding Rossmann-like Domain"/>
    <property type="match status" value="1"/>
</dbReference>
<dbReference type="HAMAP" id="MF_00087">
    <property type="entry name" value="Glu_tRNA_reductase"/>
    <property type="match status" value="1"/>
</dbReference>
<dbReference type="InterPro" id="IPR000343">
    <property type="entry name" value="4pyrrol_synth_GluRdtase"/>
</dbReference>
<dbReference type="InterPro" id="IPR015895">
    <property type="entry name" value="4pyrrol_synth_GluRdtase_N"/>
</dbReference>
<dbReference type="InterPro" id="IPR018214">
    <property type="entry name" value="GluRdtase_CS"/>
</dbReference>
<dbReference type="InterPro" id="IPR036343">
    <property type="entry name" value="GluRdtase_N_sf"/>
</dbReference>
<dbReference type="InterPro" id="IPR036291">
    <property type="entry name" value="NAD(P)-bd_dom_sf"/>
</dbReference>
<dbReference type="InterPro" id="IPR006151">
    <property type="entry name" value="Shikm_DH/Glu-tRNA_Rdtase"/>
</dbReference>
<dbReference type="PANTHER" id="PTHR43013">
    <property type="entry name" value="GLUTAMYL-TRNA REDUCTASE"/>
    <property type="match status" value="1"/>
</dbReference>
<dbReference type="PANTHER" id="PTHR43013:SF1">
    <property type="entry name" value="GLUTAMYL-TRNA REDUCTASE"/>
    <property type="match status" value="1"/>
</dbReference>
<dbReference type="Pfam" id="PF05201">
    <property type="entry name" value="GlutR_N"/>
    <property type="match status" value="1"/>
</dbReference>
<dbReference type="Pfam" id="PF01488">
    <property type="entry name" value="Shikimate_DH"/>
    <property type="match status" value="1"/>
</dbReference>
<dbReference type="SUPFAM" id="SSF69742">
    <property type="entry name" value="Glutamyl tRNA-reductase catalytic, N-terminal domain"/>
    <property type="match status" value="1"/>
</dbReference>
<dbReference type="SUPFAM" id="SSF51735">
    <property type="entry name" value="NAD(P)-binding Rossmann-fold domains"/>
    <property type="match status" value="1"/>
</dbReference>
<dbReference type="PROSITE" id="PS00747">
    <property type="entry name" value="GLUTR"/>
    <property type="match status" value="1"/>
</dbReference>
<reference key="1">
    <citation type="submission" date="2007-04" db="EMBL/GenBank/DDBJ databases">
        <title>Complete sequence of Pyrobaculum arsenaticum DSM 13514.</title>
        <authorList>
            <consortium name="US DOE Joint Genome Institute"/>
            <person name="Copeland A."/>
            <person name="Lucas S."/>
            <person name="Lapidus A."/>
            <person name="Barry K."/>
            <person name="Glavina del Rio T."/>
            <person name="Dalin E."/>
            <person name="Tice H."/>
            <person name="Pitluck S."/>
            <person name="Chain P."/>
            <person name="Malfatti S."/>
            <person name="Shin M."/>
            <person name="Vergez L."/>
            <person name="Schmutz J."/>
            <person name="Larimer F."/>
            <person name="Land M."/>
            <person name="Hauser L."/>
            <person name="Kyrpides N."/>
            <person name="Mikhailova N."/>
            <person name="Cozen A.E."/>
            <person name="Fitz-Gibbon S.T."/>
            <person name="House C.H."/>
            <person name="Saltikov C."/>
            <person name="Lowe T.M."/>
            <person name="Richardson P."/>
        </authorList>
    </citation>
    <scope>NUCLEOTIDE SEQUENCE [LARGE SCALE GENOMIC DNA]</scope>
    <source>
        <strain>ATCC 700994 / DSM 13514 / JCM 11321 / PZ6</strain>
    </source>
</reference>